<name>DCT6_CAEEL</name>
<reference key="1">
    <citation type="journal article" date="1998" name="Science">
        <title>Genome sequence of the nematode C. elegans: a platform for investigating biology.</title>
        <authorList>
            <consortium name="The C. elegans sequencing consortium"/>
        </authorList>
    </citation>
    <scope>NUCLEOTIDE SEQUENCE [LARGE SCALE GENOMIC DNA]</scope>
    <scope>ALTERNATIVE SPLICING</scope>
    <source>
        <strain>Bristol N2</strain>
    </source>
</reference>
<reference key="2">
    <citation type="journal article" date="2007" name="Nat. Genet.">
        <title>DAF-16/FOXO targets genes that regulate tumor growth in Caenorhabditis elegans.</title>
        <authorList>
            <person name="Pinkston-Gosse J."/>
            <person name="Kenyon C."/>
        </authorList>
    </citation>
    <scope>FUNCTION</scope>
</reference>
<gene>
    <name type="primary">dct-6</name>
    <name type="ORF">F25B5.1</name>
</gene>
<proteinExistence type="predicted"/>
<keyword id="KW-0025">Alternative splicing</keyword>
<keyword id="KW-0175">Coiled coil</keyword>
<keyword id="KW-1185">Reference proteome</keyword>
<accession>Q09313</accession>
<accession>Q2PJB0</accession>
<accession>Q2PJB1</accession>
<sequence>MIESTTSHQDFQQRSMTGYALEHPSYRIRGALFRHQDDGRLLSGCGGDIEVIHALELERSQHTCLPVRVTNVVVFGSNDVVRLIQPIEGTEDVIVNGDYHVSIVQSVELFESSTVSKSRILKLPGKIIAVNAEKHSNTELLLVFLLETGIFHYSFCAHTSTHFQCIQAFRCNRPITSGLLWRDSGLLHVAYYDGFVRVGVVHEQYDDMLLVKRVAVNRNNLSVLLDVVFEEIGRIQKFEDTEKQRREDMLTTSKSLSDKLVAEEEVVEGDTTNDDFAKLKIEFKNQSIRCERVSQRLTSLRKLITIIKSALDMNDQIEQMISLLVDELSELEKLEQLCKEVERTGNQNLIGKSWIAVEEKQMVVEELIAKVNSDQIKKHSDVWEQKIDQIIDQLNGCSEAAKDMRLIISQNIFEHRGDKKDVFTHFVLDAQSRDITLYCLSGLTTMAIYPRKGKRVASISLDASFATCLTAACAMKSAEGVYVADQNNVFPTYFYRNRPKAGKGEKRYLDAGNQLQLPTFDSISSILVEPHQMILGSVTGGLLHLSFDFASNYEHFVVASSILAHPISSGSVNCIKLLATGESLLALHCTDTEIVVSEKDQERWHRVTHHTGGAHAIAVTPFSVDERGAFAVVASDTFVRLKVLQYAEESLIGLHDLGESRAEDENGHPIEVLNVSLDPSMQYRQLPCKLRYAVGFADKAIRTYVALLTGQHDFNVQEKFIAQIEPLFNVQNMICFHGRPMGCYVSCAKTLQIWNDLDRHQQKKLKSERMQLLKLSSSVTSMERAEGYLLLGFADDRLSIYEEKGNGAVDLVGTVDDWHKGLNDRIVMSLRTRASKTSCGTRLFIHSLTAHHIVIHTVLVTASKIEQHDFIVAHEHSMSQPIGFEFVSYKYFEFLVYGRGISNEKLSIEDRKRMDNFRDFEFN</sequence>
<protein>
    <recommendedName>
        <fullName>Protein dct-6</fullName>
    </recommendedName>
    <alternativeName>
        <fullName>Daf-16/foxo controlled, germline tumor-affecting protein 6</fullName>
    </alternativeName>
</protein>
<organism>
    <name type="scientific">Caenorhabditis elegans</name>
    <dbReference type="NCBI Taxonomy" id="6239"/>
    <lineage>
        <taxon>Eukaryota</taxon>
        <taxon>Metazoa</taxon>
        <taxon>Ecdysozoa</taxon>
        <taxon>Nematoda</taxon>
        <taxon>Chromadorea</taxon>
        <taxon>Rhabditida</taxon>
        <taxon>Rhabditina</taxon>
        <taxon>Rhabditomorpha</taxon>
        <taxon>Rhabditoidea</taxon>
        <taxon>Rhabditidae</taxon>
        <taxon>Peloderinae</taxon>
        <taxon>Caenorhabditis</taxon>
    </lineage>
</organism>
<comment type="function">
    <text evidence="2">May have a role in tumor suppression.</text>
</comment>
<comment type="alternative products">
    <event type="alternative splicing"/>
    <isoform>
        <id>Q09313-1</id>
        <name>b</name>
        <sequence type="displayed"/>
    </isoform>
    <isoform>
        <id>Q09313-2</id>
        <name>a</name>
        <sequence type="described" ref="VSP_018518"/>
    </isoform>
</comment>
<feature type="chain" id="PRO_0000065313" description="Protein dct-6">
    <location>
        <begin position="1"/>
        <end position="923"/>
    </location>
</feature>
<feature type="coiled-coil region" evidence="1">
    <location>
        <begin position="312"/>
        <end position="347"/>
    </location>
</feature>
<feature type="splice variant" id="VSP_018518" description="In isoform a." evidence="3">
    <location>
        <begin position="497"/>
        <end position="504"/>
    </location>
</feature>
<dbReference type="EMBL" id="FO081045">
    <property type="protein sequence ID" value="CCD68771.1"/>
    <property type="molecule type" value="Genomic_DNA"/>
</dbReference>
<dbReference type="EMBL" id="FO081045">
    <property type="protein sequence ID" value="CCD68772.1"/>
    <property type="molecule type" value="Genomic_DNA"/>
</dbReference>
<dbReference type="PIR" id="T16150">
    <property type="entry name" value="T16150"/>
</dbReference>
<dbReference type="RefSeq" id="NP_001033357.2">
    <molecule id="Q09313-2"/>
    <property type="nucleotide sequence ID" value="NM_001038268.5"/>
</dbReference>
<dbReference type="RefSeq" id="NP_001033358.2">
    <molecule id="Q09313-1"/>
    <property type="nucleotide sequence ID" value="NM_001038269.5"/>
</dbReference>
<dbReference type="BioGRID" id="41067">
    <property type="interactions" value="3"/>
</dbReference>
<dbReference type="FunCoup" id="Q09313">
    <property type="interactions" value="1412"/>
</dbReference>
<dbReference type="STRING" id="6239.F25B5.1b.1"/>
<dbReference type="PaxDb" id="6239-F25B5.1b"/>
<dbReference type="PeptideAtlas" id="Q09313"/>
<dbReference type="EnsemblMetazoa" id="F25B5.1a.1">
    <molecule id="Q09313-2"/>
    <property type="protein sequence ID" value="F25B5.1a.1"/>
    <property type="gene ID" value="WBGene00017773"/>
</dbReference>
<dbReference type="EnsemblMetazoa" id="F25B5.1b.1">
    <molecule id="Q09313-1"/>
    <property type="protein sequence ID" value="F25B5.1b.1"/>
    <property type="gene ID" value="WBGene00017773"/>
</dbReference>
<dbReference type="GeneID" id="175846"/>
<dbReference type="KEGG" id="cel:CELE_F25B5.1"/>
<dbReference type="AGR" id="WB:WBGene00017773"/>
<dbReference type="CTD" id="175846"/>
<dbReference type="WormBase" id="F25B5.1a">
    <molecule id="Q09313-2"/>
    <property type="protein sequence ID" value="CE39493"/>
    <property type="gene ID" value="WBGene00017773"/>
    <property type="gene designation" value="dct-6"/>
</dbReference>
<dbReference type="WormBase" id="F25B5.1b">
    <molecule id="Q09313-1"/>
    <property type="protein sequence ID" value="CE39494"/>
    <property type="gene ID" value="WBGene00017773"/>
    <property type="gene designation" value="dct-6"/>
</dbReference>
<dbReference type="eggNOG" id="ENOG502TGY7">
    <property type="taxonomic scope" value="Eukaryota"/>
</dbReference>
<dbReference type="HOGENOM" id="CLU_318130_0_0_1"/>
<dbReference type="InParanoid" id="Q09313"/>
<dbReference type="OMA" id="AYYDGFV"/>
<dbReference type="OrthoDB" id="5868167at2759"/>
<dbReference type="PRO" id="PR:Q09313"/>
<dbReference type="Proteomes" id="UP000001940">
    <property type="component" value="Chromosome III"/>
</dbReference>
<dbReference type="Bgee" id="WBGene00017773">
    <property type="expression patterns" value="Expressed in material anatomical entity and 4 other cell types or tissues"/>
</dbReference>
<dbReference type="Gene3D" id="2.130.10.10">
    <property type="entry name" value="YVTN repeat-like/Quinoprotein amine dehydrogenase"/>
    <property type="match status" value="1"/>
</dbReference>
<dbReference type="InterPro" id="IPR015943">
    <property type="entry name" value="WD40/YVTN_repeat-like_dom_sf"/>
</dbReference>
<dbReference type="InterPro" id="IPR036322">
    <property type="entry name" value="WD40_repeat_dom_sf"/>
</dbReference>
<dbReference type="SUPFAM" id="SSF50978">
    <property type="entry name" value="WD40 repeat-like"/>
    <property type="match status" value="1"/>
</dbReference>
<evidence type="ECO:0000255" key="1"/>
<evidence type="ECO:0000269" key="2">
    <source>
    </source>
</evidence>
<evidence type="ECO:0000305" key="3"/>